<proteinExistence type="inferred from homology"/>
<keyword id="KW-0256">Endoplasmic reticulum</keyword>
<keyword id="KW-0325">Glycoprotein</keyword>
<keyword id="KW-0472">Membrane</keyword>
<keyword id="KW-1185">Reference proteome</keyword>
<keyword id="KW-0762">Sugar transport</keyword>
<keyword id="KW-0812">Transmembrane</keyword>
<keyword id="KW-1133">Transmembrane helix</keyword>
<keyword id="KW-0813">Transport</keyword>
<organism>
    <name type="scientific">Aspergillus fumigatus (strain ATCC MYA-4609 / CBS 101355 / FGSC A1100 / Af293)</name>
    <name type="common">Neosartorya fumigata</name>
    <dbReference type="NCBI Taxonomy" id="330879"/>
    <lineage>
        <taxon>Eukaryota</taxon>
        <taxon>Fungi</taxon>
        <taxon>Dikarya</taxon>
        <taxon>Ascomycota</taxon>
        <taxon>Pezizomycotina</taxon>
        <taxon>Eurotiomycetes</taxon>
        <taxon>Eurotiomycetidae</taxon>
        <taxon>Eurotiales</taxon>
        <taxon>Aspergillaceae</taxon>
        <taxon>Aspergillus</taxon>
        <taxon>Aspergillus subgen. Fumigati</taxon>
    </lineage>
</organism>
<evidence type="ECO:0000250" key="1"/>
<evidence type="ECO:0000255" key="2"/>
<evidence type="ECO:0000256" key="3">
    <source>
        <dbReference type="SAM" id="MobiDB-lite"/>
    </source>
</evidence>
<evidence type="ECO:0000305" key="4"/>
<reference key="1">
    <citation type="journal article" date="2005" name="Nature">
        <title>Genomic sequence of the pathogenic and allergenic filamentous fungus Aspergillus fumigatus.</title>
        <authorList>
            <person name="Nierman W.C."/>
            <person name="Pain A."/>
            <person name="Anderson M.J."/>
            <person name="Wortman J.R."/>
            <person name="Kim H.S."/>
            <person name="Arroyo J."/>
            <person name="Berriman M."/>
            <person name="Abe K."/>
            <person name="Archer D.B."/>
            <person name="Bermejo C."/>
            <person name="Bennett J.W."/>
            <person name="Bowyer P."/>
            <person name="Chen D."/>
            <person name="Collins M."/>
            <person name="Coulsen R."/>
            <person name="Davies R."/>
            <person name="Dyer P.S."/>
            <person name="Farman M.L."/>
            <person name="Fedorova N."/>
            <person name="Fedorova N.D."/>
            <person name="Feldblyum T.V."/>
            <person name="Fischer R."/>
            <person name="Fosker N."/>
            <person name="Fraser A."/>
            <person name="Garcia J.L."/>
            <person name="Garcia M.J."/>
            <person name="Goble A."/>
            <person name="Goldman G.H."/>
            <person name="Gomi K."/>
            <person name="Griffith-Jones S."/>
            <person name="Gwilliam R."/>
            <person name="Haas B.J."/>
            <person name="Haas H."/>
            <person name="Harris D.E."/>
            <person name="Horiuchi H."/>
            <person name="Huang J."/>
            <person name="Humphray S."/>
            <person name="Jimenez J."/>
            <person name="Keller N."/>
            <person name="Khouri H."/>
            <person name="Kitamoto K."/>
            <person name="Kobayashi T."/>
            <person name="Konzack S."/>
            <person name="Kulkarni R."/>
            <person name="Kumagai T."/>
            <person name="Lafton A."/>
            <person name="Latge J.-P."/>
            <person name="Li W."/>
            <person name="Lord A."/>
            <person name="Lu C."/>
            <person name="Majoros W.H."/>
            <person name="May G.S."/>
            <person name="Miller B.L."/>
            <person name="Mohamoud Y."/>
            <person name="Molina M."/>
            <person name="Monod M."/>
            <person name="Mouyna I."/>
            <person name="Mulligan S."/>
            <person name="Murphy L.D."/>
            <person name="O'Neil S."/>
            <person name="Paulsen I."/>
            <person name="Penalva M.A."/>
            <person name="Pertea M."/>
            <person name="Price C."/>
            <person name="Pritchard B.L."/>
            <person name="Quail M.A."/>
            <person name="Rabbinowitsch E."/>
            <person name="Rawlins N."/>
            <person name="Rajandream M.A."/>
            <person name="Reichard U."/>
            <person name="Renauld H."/>
            <person name="Robson G.D."/>
            <person name="Rodriguez de Cordoba S."/>
            <person name="Rodriguez-Pena J.M."/>
            <person name="Ronning C.M."/>
            <person name="Rutter S."/>
            <person name="Salzberg S.L."/>
            <person name="Sanchez M."/>
            <person name="Sanchez-Ferrero J.C."/>
            <person name="Saunders D."/>
            <person name="Seeger K."/>
            <person name="Squares R."/>
            <person name="Squares S."/>
            <person name="Takeuchi M."/>
            <person name="Tekaia F."/>
            <person name="Turner G."/>
            <person name="Vazquez de Aldana C.R."/>
            <person name="Weidman J."/>
            <person name="White O."/>
            <person name="Woodward J.R."/>
            <person name="Yu J.-H."/>
            <person name="Fraser C.M."/>
            <person name="Galagan J.E."/>
            <person name="Asai K."/>
            <person name="Machida M."/>
            <person name="Hall N."/>
            <person name="Barrell B.G."/>
            <person name="Denning D.W."/>
        </authorList>
    </citation>
    <scope>NUCLEOTIDE SEQUENCE [LARGE SCALE GENOMIC DNA]</scope>
    <source>
        <strain>ATCC MYA-4609 / CBS 101355 / FGSC A1100 / Af293</strain>
    </source>
</reference>
<comment type="function">
    <text evidence="1">May be involved in specific transport of UDP-Gal from the cytosol to the Golgi lumen. Involved in the maintenance of optimal conditions for the folding of secretory pathway proteins in the endoplasmic reticulum (By similarity).</text>
</comment>
<comment type="subcellular location">
    <subcellularLocation>
        <location evidence="1">Endoplasmic reticulum membrane</location>
        <topology evidence="1">Multi-pass membrane protein</topology>
    </subcellularLocation>
</comment>
<comment type="similarity">
    <text evidence="4">Belongs to the nucleotide-sugar transporter family. SLC35B subfamily.</text>
</comment>
<accession>Q4WJM7</accession>
<name>HUT1_ASPFU</name>
<gene>
    <name type="primary">hut1</name>
    <name type="ORF">AFUA_1G05440</name>
</gene>
<dbReference type="EMBL" id="AAHF01000007">
    <property type="protein sequence ID" value="EAL88255.1"/>
    <property type="molecule type" value="Genomic_DNA"/>
</dbReference>
<dbReference type="RefSeq" id="XP_750293.1">
    <property type="nucleotide sequence ID" value="XM_745200.1"/>
</dbReference>
<dbReference type="FunCoup" id="Q4WJM7">
    <property type="interactions" value="472"/>
</dbReference>
<dbReference type="STRING" id="330879.Q4WJM7"/>
<dbReference type="GlyCosmos" id="Q4WJM7">
    <property type="glycosylation" value="4 sites, No reported glycans"/>
</dbReference>
<dbReference type="EnsemblFungi" id="EAL88255">
    <property type="protein sequence ID" value="EAL88255"/>
    <property type="gene ID" value="AFUA_1G05440"/>
</dbReference>
<dbReference type="GeneID" id="3507549"/>
<dbReference type="KEGG" id="afm:AFUA_1G05440"/>
<dbReference type="eggNOG" id="KOG1581">
    <property type="taxonomic scope" value="Eukaryota"/>
</dbReference>
<dbReference type="HOGENOM" id="CLU_036019_0_2_1"/>
<dbReference type="InParanoid" id="Q4WJM7"/>
<dbReference type="OMA" id="CGAIGQV"/>
<dbReference type="OrthoDB" id="1601at2759"/>
<dbReference type="Proteomes" id="UP000002530">
    <property type="component" value="Chromosome 1"/>
</dbReference>
<dbReference type="GO" id="GO:0005789">
    <property type="term" value="C:endoplasmic reticulum membrane"/>
    <property type="evidence" value="ECO:0000318"/>
    <property type="project" value="GO_Central"/>
</dbReference>
<dbReference type="GO" id="GO:0000139">
    <property type="term" value="C:Golgi membrane"/>
    <property type="evidence" value="ECO:0000318"/>
    <property type="project" value="GO_Central"/>
</dbReference>
<dbReference type="GO" id="GO:0005459">
    <property type="term" value="F:UDP-galactose transmembrane transporter activity"/>
    <property type="evidence" value="ECO:0000318"/>
    <property type="project" value="GO_Central"/>
</dbReference>
<dbReference type="GO" id="GO:0005460">
    <property type="term" value="F:UDP-glucose transmembrane transporter activity"/>
    <property type="evidence" value="ECO:0000318"/>
    <property type="project" value="GO_Central"/>
</dbReference>
<dbReference type="GO" id="GO:0072334">
    <property type="term" value="P:UDP-galactose transmembrane transport"/>
    <property type="evidence" value="ECO:0000318"/>
    <property type="project" value="GO_Central"/>
</dbReference>
<dbReference type="GO" id="GO:0120112">
    <property type="term" value="P:UDP-glucose transmembrane transport into endoplasmic reticulum"/>
    <property type="evidence" value="ECO:0007669"/>
    <property type="project" value="EnsemblFungi"/>
</dbReference>
<dbReference type="Gene3D" id="1.10.3730.20">
    <property type="match status" value="1"/>
</dbReference>
<dbReference type="InterPro" id="IPR013657">
    <property type="entry name" value="SCL35B1-4/HUT1"/>
</dbReference>
<dbReference type="PANTHER" id="PTHR10778">
    <property type="entry name" value="SOLUTE CARRIER FAMILY 35 MEMBER B"/>
    <property type="match status" value="1"/>
</dbReference>
<dbReference type="PANTHER" id="PTHR10778:SF10">
    <property type="entry name" value="SOLUTE CARRIER FAMILY 35 MEMBER B1"/>
    <property type="match status" value="1"/>
</dbReference>
<dbReference type="Pfam" id="PF08449">
    <property type="entry name" value="UAA"/>
    <property type="match status" value="1"/>
</dbReference>
<dbReference type="SUPFAM" id="SSF103481">
    <property type="entry name" value="Multidrug resistance efflux transporter EmrE"/>
    <property type="match status" value="1"/>
</dbReference>
<feature type="chain" id="PRO_0000213404" description="UDP-galactose transporter homolog 1">
    <location>
        <begin position="1"/>
        <end position="415"/>
    </location>
</feature>
<feature type="transmembrane region" description="Helical" evidence="2">
    <location>
        <begin position="45"/>
        <end position="65"/>
    </location>
</feature>
<feature type="transmembrane region" description="Helical" evidence="2">
    <location>
        <begin position="95"/>
        <end position="115"/>
    </location>
</feature>
<feature type="transmembrane region" description="Helical" evidence="2">
    <location>
        <begin position="132"/>
        <end position="152"/>
    </location>
</feature>
<feature type="transmembrane region" description="Helical" evidence="2">
    <location>
        <begin position="161"/>
        <end position="181"/>
    </location>
</feature>
<feature type="transmembrane region" description="Helical" evidence="2">
    <location>
        <begin position="185"/>
        <end position="205"/>
    </location>
</feature>
<feature type="transmembrane region" description="Helical" evidence="2">
    <location>
        <begin position="223"/>
        <end position="243"/>
    </location>
</feature>
<feature type="transmembrane region" description="Helical" evidence="2">
    <location>
        <begin position="281"/>
        <end position="301"/>
    </location>
</feature>
<feature type="transmembrane region" description="Helical" evidence="2">
    <location>
        <begin position="325"/>
        <end position="345"/>
    </location>
</feature>
<feature type="transmembrane region" description="Helical" evidence="2">
    <location>
        <begin position="368"/>
        <end position="388"/>
    </location>
</feature>
<feature type="region of interest" description="Disordered" evidence="3">
    <location>
        <begin position="1"/>
        <end position="39"/>
    </location>
</feature>
<feature type="compositionally biased region" description="Polar residues" evidence="3">
    <location>
        <begin position="9"/>
        <end position="33"/>
    </location>
</feature>
<feature type="glycosylation site" description="N-linked (GlcNAc...) asparagine" evidence="2">
    <location>
        <position position="16"/>
    </location>
</feature>
<feature type="glycosylation site" description="N-linked (GlcNAc...) asparagine" evidence="2">
    <location>
        <position position="26"/>
    </location>
</feature>
<feature type="glycosylation site" description="N-linked (GlcNAc...) asparagine" evidence="2">
    <location>
        <position position="221"/>
    </location>
</feature>
<feature type="glycosylation site" description="N-linked (GlcNAc...) asparagine" evidence="2">
    <location>
        <position position="244"/>
    </location>
</feature>
<protein>
    <recommendedName>
        <fullName>UDP-galactose transporter homolog 1</fullName>
    </recommendedName>
</protein>
<sequence length="415" mass="44851">MHLVPEGSESMSTQQNGSAQKPVTLNGSASTKGQAPEAPLETPGLIQLAICVLGIYASFLSWGVLQEAITTVNFPVRPPTAEEPNPPTERFTFSIVLNTIQSTFAAITGFLYLYFSTPAGKKVPSIFPTRKILFPLLLVSISSSLASPFGYASLAHIDYLTFILAKSCKLLPVMFLHLTIFRKTYPLYKYGVVLLVTLGVATFTLHHPGTSKKVAASAAKNQSGSSLYGIFLLSINLLLDGLTNTTQDHVFSSPQIYTRFTGPQMMVAQNILSTILTTTYLLVMPHLSSTGALHALLPIPIPPSTETELASAVSFLSRHPEVMKNVLGFAACGAIGQLFIFYTLSRFSSLLLVTVTVTRKMLTMLLSVFWFGHTLSAGQWLGIGLVFGGIGAEAVVQKREKQSKEQAKALTGKKE</sequence>